<accession>Q6B9Z0</accession>
<feature type="signal peptide" evidence="1">
    <location>
        <begin position="1"/>
        <end position="24"/>
    </location>
</feature>
<feature type="chain" id="PRO_0000045063" description="Insulin growth factor-like family member">
    <location>
        <begin position="25"/>
        <end position="140"/>
    </location>
</feature>
<comment type="function">
    <text evidence="2">Probable ligand of the IGFLR1 cell membrane receptor.</text>
</comment>
<comment type="subunit">
    <text evidence="2">Homodimer; disulfide-linked.</text>
</comment>
<comment type="interaction">
    <interactant intactId="EBI-3870418">
        <id>Q6B9Z0</id>
    </interactant>
    <interactant intactId="EBI-3870498">
        <id>Q3U4N7</id>
        <label>Igflr1</label>
    </interactant>
    <organismsDiffer>false</organismsDiffer>
    <experiments>3</experiments>
</comment>
<comment type="subcellular location">
    <subcellularLocation>
        <location evidence="2">Secreted</location>
    </subcellularLocation>
</comment>
<comment type="tissue specificity">
    <text evidence="2">Highly expressed in skin. Also detected in colon, thymus, mammary gland, lymph node and lung.</text>
</comment>
<comment type="induction">
    <text evidence="2">Up-regulated by Imiquimod. Up-regulated in skin upon tissue inflammation and injury.</text>
</comment>
<comment type="similarity">
    <text evidence="3">Belongs to the IGFL family.</text>
</comment>
<name>IGFL_MOUSE</name>
<proteinExistence type="evidence at protein level"/>
<keyword id="KW-1015">Disulfide bond</keyword>
<keyword id="KW-1185">Reference proteome</keyword>
<keyword id="KW-0964">Secreted</keyword>
<keyword id="KW-0732">Signal</keyword>
<protein>
    <recommendedName>
        <fullName>Insulin growth factor-like family member</fullName>
    </recommendedName>
</protein>
<gene>
    <name type="primary">Igfl</name>
    <name type="synonym">Gm580</name>
    <name type="synonym">Igfl3</name>
    <name type="synonym">mIgfl</name>
</gene>
<reference key="1">
    <citation type="journal article" date="2006" name="Genomics">
        <title>IGFL: a secreted family with conserved cysteine residues and similarities to the IGF superfamily.</title>
        <authorList>
            <person name="Emtage P."/>
            <person name="Vatta P."/>
            <person name="Arterburn M."/>
            <person name="Muller M.W."/>
            <person name="Park E."/>
            <person name="Boyle B."/>
            <person name="Hazell S."/>
            <person name="Polizotto R."/>
            <person name="Funk W.D."/>
            <person name="Tang Y.T."/>
        </authorList>
    </citation>
    <scope>NUCLEOTIDE SEQUENCE [MRNA]</scope>
    <source>
        <tissue>Skin</tissue>
    </source>
</reference>
<reference key="2">
    <citation type="journal article" date="2011" name="J. Biol. Chem.">
        <title>Murine IGFL and human IGFL1 are induced in inflammatory skin conditions and bind to a novel TNF receptor family member, IGFLR1.</title>
        <authorList>
            <person name="Lobito A.A."/>
            <person name="Ramani S.R."/>
            <person name="Tom I."/>
            <person name="Bazan J.F."/>
            <person name="Luis E."/>
            <person name="Fairbrother W.J."/>
            <person name="Ouyang W."/>
            <person name="Gonzalez L.C."/>
        </authorList>
    </citation>
    <scope>FUNCTION</scope>
    <scope>SUBCELLULAR LOCATION</scope>
    <scope>HOMODIMERIZATION</scope>
    <scope>DISULFIDE BONDS</scope>
    <scope>TISSUE SPECIFICITY</scope>
    <scope>INDUCTION BY IMIQUIMOD</scope>
</reference>
<evidence type="ECO:0000255" key="1"/>
<evidence type="ECO:0000269" key="2">
    <source>
    </source>
</evidence>
<evidence type="ECO:0000305" key="3"/>
<organism>
    <name type="scientific">Mus musculus</name>
    <name type="common">Mouse</name>
    <dbReference type="NCBI Taxonomy" id="10090"/>
    <lineage>
        <taxon>Eukaryota</taxon>
        <taxon>Metazoa</taxon>
        <taxon>Chordata</taxon>
        <taxon>Craniata</taxon>
        <taxon>Vertebrata</taxon>
        <taxon>Euteleostomi</taxon>
        <taxon>Mammalia</taxon>
        <taxon>Eutheria</taxon>
        <taxon>Euarchontoglires</taxon>
        <taxon>Glires</taxon>
        <taxon>Rodentia</taxon>
        <taxon>Myomorpha</taxon>
        <taxon>Muroidea</taxon>
        <taxon>Muridae</taxon>
        <taxon>Murinae</taxon>
        <taxon>Mus</taxon>
        <taxon>Mus</taxon>
    </lineage>
</organism>
<dbReference type="EMBL" id="AY672115">
    <property type="protein sequence ID" value="AAT77789.1"/>
    <property type="molecule type" value="mRNA"/>
</dbReference>
<dbReference type="CCDS" id="CCDS52049.1"/>
<dbReference type="RefSeq" id="NP_001003393.1">
    <property type="nucleotide sequence ID" value="NM_001003393.1"/>
</dbReference>
<dbReference type="FunCoup" id="Q6B9Z0">
    <property type="interactions" value="219"/>
</dbReference>
<dbReference type="IntAct" id="Q6B9Z0">
    <property type="interactions" value="1"/>
</dbReference>
<dbReference type="STRING" id="10090.ENSMUSP00000123628"/>
<dbReference type="PaxDb" id="10090-ENSMUSP00000123628"/>
<dbReference type="DNASU" id="232925"/>
<dbReference type="Ensembl" id="ENSMUST00000152973.2">
    <property type="protein sequence ID" value="ENSMUSP00000123628.2"/>
    <property type="gene ID" value="ENSMUSG00000066756.6"/>
</dbReference>
<dbReference type="GeneID" id="232925"/>
<dbReference type="KEGG" id="mmu:232925"/>
<dbReference type="UCSC" id="uc009fjg.1">
    <property type="organism name" value="mouse"/>
</dbReference>
<dbReference type="AGR" id="MGI:2685426"/>
<dbReference type="CTD" id="388555"/>
<dbReference type="MGI" id="MGI:2685426">
    <property type="gene designation" value="Igfl3"/>
</dbReference>
<dbReference type="VEuPathDB" id="HostDB:ENSMUSG00000066756"/>
<dbReference type="GeneTree" id="ENSGT00390000009557"/>
<dbReference type="HOGENOM" id="CLU_148773_1_0_1"/>
<dbReference type="InParanoid" id="Q6B9Z0"/>
<dbReference type="OMA" id="CGPSCTY"/>
<dbReference type="OrthoDB" id="9834561at2759"/>
<dbReference type="PhylomeDB" id="Q6B9Z0"/>
<dbReference type="TreeFam" id="TF343427"/>
<dbReference type="BioGRID-ORCS" id="232925">
    <property type="hits" value="1 hit in 76 CRISPR screens"/>
</dbReference>
<dbReference type="PRO" id="PR:Q6B9Z0"/>
<dbReference type="Proteomes" id="UP000000589">
    <property type="component" value="Chromosome 7"/>
</dbReference>
<dbReference type="RNAct" id="Q6B9Z0">
    <property type="molecule type" value="protein"/>
</dbReference>
<dbReference type="Bgee" id="ENSMUSG00000066756">
    <property type="expression patterns" value="Expressed in zone of skin and 2 other cell types or tissues"/>
</dbReference>
<dbReference type="GO" id="GO:0005615">
    <property type="term" value="C:extracellular space"/>
    <property type="evidence" value="ECO:0000314"/>
    <property type="project" value="UniProtKB"/>
</dbReference>
<dbReference type="InterPro" id="IPR032744">
    <property type="entry name" value="IGFL"/>
</dbReference>
<dbReference type="PANTHER" id="PTHR34827:SF5">
    <property type="entry name" value="INSULIN GROWTH FACTOR-LIKE FAMILY MEMBER 3"/>
    <property type="match status" value="1"/>
</dbReference>
<dbReference type="PANTHER" id="PTHR34827">
    <property type="entry name" value="INSULIN GROWTH FACTOR-LIKE FAMILY MEMBER 3-RELATED"/>
    <property type="match status" value="1"/>
</dbReference>
<dbReference type="Pfam" id="PF14653">
    <property type="entry name" value="IGFL"/>
    <property type="match status" value="1"/>
</dbReference>
<sequence length="140" mass="15667">MKIRNACAVLIEVLLFILEGVTGARKISTFSGPGSWPCNPKCDGRTYNPSEECCVHDTILPFKRINLCGPSCTYRPCFELCCPESYSPKKKFIVKLKVHGERSHCSSSPISRNCKSNKIFHGEDIEDNQLSLRKKSGDQP</sequence>